<evidence type="ECO:0000250" key="1">
    <source>
        <dbReference type="UniProtKB" id="A2RTX5"/>
    </source>
</evidence>
<evidence type="ECO:0000255" key="2"/>
<evidence type="ECO:0000255" key="3">
    <source>
        <dbReference type="PROSITE-ProRule" id="PRU01228"/>
    </source>
</evidence>
<evidence type="ECO:0000256" key="4">
    <source>
        <dbReference type="SAM" id="MobiDB-lite"/>
    </source>
</evidence>
<evidence type="ECO:0000269" key="5">
    <source>
    </source>
</evidence>
<evidence type="ECO:0000305" key="6"/>
<keyword id="KW-0007">Acetylation</keyword>
<keyword id="KW-0030">Aminoacyl-tRNA synthetase</keyword>
<keyword id="KW-0067">ATP-binding</keyword>
<keyword id="KW-0175">Coiled coil</keyword>
<keyword id="KW-0963">Cytoplasm</keyword>
<keyword id="KW-0436">Ligase</keyword>
<keyword id="KW-0547">Nucleotide-binding</keyword>
<keyword id="KW-0539">Nucleus</keyword>
<keyword id="KW-0597">Phosphoprotein</keyword>
<keyword id="KW-0648">Protein biosynthesis</keyword>
<keyword id="KW-1185">Reference proteome</keyword>
<gene>
    <name type="primary">Tars3</name>
    <name type="synonym">Tarsl2</name>
</gene>
<reference key="1">
    <citation type="journal article" date="2005" name="Science">
        <title>The transcriptional landscape of the mammalian genome.</title>
        <authorList>
            <person name="Carninci P."/>
            <person name="Kasukawa T."/>
            <person name="Katayama S."/>
            <person name="Gough J."/>
            <person name="Frith M.C."/>
            <person name="Maeda N."/>
            <person name="Oyama R."/>
            <person name="Ravasi T."/>
            <person name="Lenhard B."/>
            <person name="Wells C."/>
            <person name="Kodzius R."/>
            <person name="Shimokawa K."/>
            <person name="Bajic V.B."/>
            <person name="Brenner S.E."/>
            <person name="Batalov S."/>
            <person name="Forrest A.R."/>
            <person name="Zavolan M."/>
            <person name="Davis M.J."/>
            <person name="Wilming L.G."/>
            <person name="Aidinis V."/>
            <person name="Allen J.E."/>
            <person name="Ambesi-Impiombato A."/>
            <person name="Apweiler R."/>
            <person name="Aturaliya R.N."/>
            <person name="Bailey T.L."/>
            <person name="Bansal M."/>
            <person name="Baxter L."/>
            <person name="Beisel K.W."/>
            <person name="Bersano T."/>
            <person name="Bono H."/>
            <person name="Chalk A.M."/>
            <person name="Chiu K.P."/>
            <person name="Choudhary V."/>
            <person name="Christoffels A."/>
            <person name="Clutterbuck D.R."/>
            <person name="Crowe M.L."/>
            <person name="Dalla E."/>
            <person name="Dalrymple B.P."/>
            <person name="de Bono B."/>
            <person name="Della Gatta G."/>
            <person name="di Bernardo D."/>
            <person name="Down T."/>
            <person name="Engstrom P."/>
            <person name="Fagiolini M."/>
            <person name="Faulkner G."/>
            <person name="Fletcher C.F."/>
            <person name="Fukushima T."/>
            <person name="Furuno M."/>
            <person name="Futaki S."/>
            <person name="Gariboldi M."/>
            <person name="Georgii-Hemming P."/>
            <person name="Gingeras T.R."/>
            <person name="Gojobori T."/>
            <person name="Green R.E."/>
            <person name="Gustincich S."/>
            <person name="Harbers M."/>
            <person name="Hayashi Y."/>
            <person name="Hensch T.K."/>
            <person name="Hirokawa N."/>
            <person name="Hill D."/>
            <person name="Huminiecki L."/>
            <person name="Iacono M."/>
            <person name="Ikeo K."/>
            <person name="Iwama A."/>
            <person name="Ishikawa T."/>
            <person name="Jakt M."/>
            <person name="Kanapin A."/>
            <person name="Katoh M."/>
            <person name="Kawasawa Y."/>
            <person name="Kelso J."/>
            <person name="Kitamura H."/>
            <person name="Kitano H."/>
            <person name="Kollias G."/>
            <person name="Krishnan S.P."/>
            <person name="Kruger A."/>
            <person name="Kummerfeld S.K."/>
            <person name="Kurochkin I.V."/>
            <person name="Lareau L.F."/>
            <person name="Lazarevic D."/>
            <person name="Lipovich L."/>
            <person name="Liu J."/>
            <person name="Liuni S."/>
            <person name="McWilliam S."/>
            <person name="Madan Babu M."/>
            <person name="Madera M."/>
            <person name="Marchionni L."/>
            <person name="Matsuda H."/>
            <person name="Matsuzawa S."/>
            <person name="Miki H."/>
            <person name="Mignone F."/>
            <person name="Miyake S."/>
            <person name="Morris K."/>
            <person name="Mottagui-Tabar S."/>
            <person name="Mulder N."/>
            <person name="Nakano N."/>
            <person name="Nakauchi H."/>
            <person name="Ng P."/>
            <person name="Nilsson R."/>
            <person name="Nishiguchi S."/>
            <person name="Nishikawa S."/>
            <person name="Nori F."/>
            <person name="Ohara O."/>
            <person name="Okazaki Y."/>
            <person name="Orlando V."/>
            <person name="Pang K.C."/>
            <person name="Pavan W.J."/>
            <person name="Pavesi G."/>
            <person name="Pesole G."/>
            <person name="Petrovsky N."/>
            <person name="Piazza S."/>
            <person name="Reed J."/>
            <person name="Reid J.F."/>
            <person name="Ring B.Z."/>
            <person name="Ringwald M."/>
            <person name="Rost B."/>
            <person name="Ruan Y."/>
            <person name="Salzberg S.L."/>
            <person name="Sandelin A."/>
            <person name="Schneider C."/>
            <person name="Schoenbach C."/>
            <person name="Sekiguchi K."/>
            <person name="Semple C.A."/>
            <person name="Seno S."/>
            <person name="Sessa L."/>
            <person name="Sheng Y."/>
            <person name="Shibata Y."/>
            <person name="Shimada H."/>
            <person name="Shimada K."/>
            <person name="Silva D."/>
            <person name="Sinclair B."/>
            <person name="Sperling S."/>
            <person name="Stupka E."/>
            <person name="Sugiura K."/>
            <person name="Sultana R."/>
            <person name="Takenaka Y."/>
            <person name="Taki K."/>
            <person name="Tammoja K."/>
            <person name="Tan S.L."/>
            <person name="Tang S."/>
            <person name="Taylor M.S."/>
            <person name="Tegner J."/>
            <person name="Teichmann S.A."/>
            <person name="Ueda H.R."/>
            <person name="van Nimwegen E."/>
            <person name="Verardo R."/>
            <person name="Wei C.L."/>
            <person name="Yagi K."/>
            <person name="Yamanishi H."/>
            <person name="Zabarovsky E."/>
            <person name="Zhu S."/>
            <person name="Zimmer A."/>
            <person name="Hide W."/>
            <person name="Bult C."/>
            <person name="Grimmond S.M."/>
            <person name="Teasdale R.D."/>
            <person name="Liu E.T."/>
            <person name="Brusic V."/>
            <person name="Quackenbush J."/>
            <person name="Wahlestedt C."/>
            <person name="Mattick J.S."/>
            <person name="Hume D.A."/>
            <person name="Kai C."/>
            <person name="Sasaki D."/>
            <person name="Tomaru Y."/>
            <person name="Fukuda S."/>
            <person name="Kanamori-Katayama M."/>
            <person name="Suzuki M."/>
            <person name="Aoki J."/>
            <person name="Arakawa T."/>
            <person name="Iida J."/>
            <person name="Imamura K."/>
            <person name="Itoh M."/>
            <person name="Kato T."/>
            <person name="Kawaji H."/>
            <person name="Kawagashira N."/>
            <person name="Kawashima T."/>
            <person name="Kojima M."/>
            <person name="Kondo S."/>
            <person name="Konno H."/>
            <person name="Nakano K."/>
            <person name="Ninomiya N."/>
            <person name="Nishio T."/>
            <person name="Okada M."/>
            <person name="Plessy C."/>
            <person name="Shibata K."/>
            <person name="Shiraki T."/>
            <person name="Suzuki S."/>
            <person name="Tagami M."/>
            <person name="Waki K."/>
            <person name="Watahiki A."/>
            <person name="Okamura-Oho Y."/>
            <person name="Suzuki H."/>
            <person name="Kawai J."/>
            <person name="Hayashizaki Y."/>
        </authorList>
    </citation>
    <scope>NUCLEOTIDE SEQUENCE [LARGE SCALE MRNA]</scope>
    <source>
        <strain>C57BL/6J</strain>
    </source>
</reference>
<reference key="2">
    <citation type="journal article" date="2004" name="Genome Res.">
        <title>The status, quality, and expansion of the NIH full-length cDNA project: the Mammalian Gene Collection (MGC).</title>
        <authorList>
            <consortium name="The MGC Project Team"/>
        </authorList>
    </citation>
    <scope>NUCLEOTIDE SEQUENCE [LARGE SCALE MRNA]</scope>
    <source>
        <strain>FVB/N</strain>
        <tissue>Mammary tumor</tissue>
    </source>
</reference>
<reference key="3">
    <citation type="journal article" date="2010" name="Cell">
        <title>A tissue-specific atlas of mouse protein phosphorylation and expression.</title>
        <authorList>
            <person name="Huttlin E.L."/>
            <person name="Jedrychowski M.P."/>
            <person name="Elias J.E."/>
            <person name="Goswami T."/>
            <person name="Rad R."/>
            <person name="Beausoleil S.A."/>
            <person name="Villen J."/>
            <person name="Haas W."/>
            <person name="Sowa M.E."/>
            <person name="Gygi S.P."/>
        </authorList>
    </citation>
    <scope>IDENTIFICATION BY MASS SPECTROMETRY [LARGE SCALE ANALYSIS]</scope>
    <source>
        <tissue>Brain</tissue>
        <tissue>Brown adipose tissue</tissue>
        <tissue>Heart</tissue>
        <tissue>Kidney</tissue>
        <tissue>Liver</tissue>
        <tissue>Pancreas</tissue>
        <tissue>Spleen</tissue>
        <tissue>Testis</tissue>
    </source>
</reference>
<reference key="4">
    <citation type="journal article" date="2018" name="Nucleic Acids Res.">
        <title>A threonyl-tRNA synthetase-like protein has tRNA aminoacylation and editing activities.</title>
        <authorList>
            <person name="Chen Y."/>
            <person name="Ruan Z.R."/>
            <person name="Wang Y."/>
            <person name="Huang Q."/>
            <person name="Xue M.Q."/>
            <person name="Zhou X.L."/>
            <person name="Wang E.D."/>
        </authorList>
    </citation>
    <scope>FUNCTION</scope>
    <scope>CATALYTIC ACTIVITY</scope>
    <scope>SUBCELLULAR LOCATION</scope>
    <scope>TISSUE SPECIFICITY</scope>
    <scope>NUCLEAR LOCALIZATION SIGNAL</scope>
    <scope>MUTAGENESIS OF HIS-222; HIS-226; CYS-480; ARG-509 AND 774-LYS--LYS-780</scope>
</reference>
<accession>Q8BLY2</accession>
<accession>Q8CHT2</accession>
<protein>
    <recommendedName>
        <fullName>Threonine--tRNA ligase 2, cytoplasmic</fullName>
        <ecNumber evidence="5">6.1.1.3</ecNumber>
    </recommendedName>
    <alternativeName>
        <fullName>Threonyl-tRNA synthetase</fullName>
        <shortName>ThrRS</shortName>
    </alternativeName>
    <alternativeName>
        <fullName>Threonyl-tRNA synthetase protein 3</fullName>
    </alternativeName>
</protein>
<dbReference type="EC" id="6.1.1.3" evidence="5"/>
<dbReference type="EMBL" id="AK040927">
    <property type="protein sequence ID" value="BAC30749.1"/>
    <property type="molecule type" value="mRNA"/>
</dbReference>
<dbReference type="EMBL" id="BC039225">
    <property type="protein sequence ID" value="AAH39225.1"/>
    <property type="molecule type" value="mRNA"/>
</dbReference>
<dbReference type="CCDS" id="CCDS21339.1"/>
<dbReference type="RefSeq" id="NP_758514.2">
    <property type="nucleotide sequence ID" value="NM_172310.2"/>
</dbReference>
<dbReference type="SMR" id="Q8BLY2"/>
<dbReference type="BioGRID" id="234870">
    <property type="interactions" value="3"/>
</dbReference>
<dbReference type="FunCoup" id="Q8BLY2">
    <property type="interactions" value="1797"/>
</dbReference>
<dbReference type="STRING" id="10090.ENSMUSP00000032728"/>
<dbReference type="PhosphoSitePlus" id="Q8BLY2"/>
<dbReference type="jPOST" id="Q8BLY2"/>
<dbReference type="PaxDb" id="10090-ENSMUSP00000032728"/>
<dbReference type="PeptideAtlas" id="Q8BLY2"/>
<dbReference type="ProteomicsDB" id="263195"/>
<dbReference type="Pumba" id="Q8BLY2"/>
<dbReference type="Antibodypedia" id="53619">
    <property type="antibodies" value="136 antibodies from 21 providers"/>
</dbReference>
<dbReference type="DNASU" id="272396"/>
<dbReference type="Ensembl" id="ENSMUST00000032728.9">
    <property type="protein sequence ID" value="ENSMUSP00000032728.9"/>
    <property type="gene ID" value="ENSMUSG00000030515.10"/>
</dbReference>
<dbReference type="GeneID" id="272396"/>
<dbReference type="KEGG" id="mmu:272396"/>
<dbReference type="UCSC" id="uc009hgr.2">
    <property type="organism name" value="mouse"/>
</dbReference>
<dbReference type="AGR" id="MGI:2444486"/>
<dbReference type="CTD" id="123283"/>
<dbReference type="MGI" id="MGI:2444486">
    <property type="gene designation" value="Tars3"/>
</dbReference>
<dbReference type="VEuPathDB" id="HostDB:ENSMUSG00000030515"/>
<dbReference type="eggNOG" id="KOG1637">
    <property type="taxonomic scope" value="Eukaryota"/>
</dbReference>
<dbReference type="GeneTree" id="ENSGT00940000159348"/>
<dbReference type="HOGENOM" id="CLU_008554_0_3_1"/>
<dbReference type="InParanoid" id="Q8BLY2"/>
<dbReference type="OMA" id="WYADGMY"/>
<dbReference type="OrthoDB" id="16242at9989"/>
<dbReference type="PhylomeDB" id="Q8BLY2"/>
<dbReference type="TreeFam" id="TF300858"/>
<dbReference type="BioGRID-ORCS" id="272396">
    <property type="hits" value="3 hits in 75 CRISPR screens"/>
</dbReference>
<dbReference type="ChiTaRS" id="Tarsl2">
    <property type="organism name" value="mouse"/>
</dbReference>
<dbReference type="PRO" id="PR:Q8BLY2"/>
<dbReference type="Proteomes" id="UP000000589">
    <property type="component" value="Chromosome 7"/>
</dbReference>
<dbReference type="RNAct" id="Q8BLY2">
    <property type="molecule type" value="protein"/>
</dbReference>
<dbReference type="Bgee" id="ENSMUSG00000030515">
    <property type="expression patterns" value="Expressed in quadriceps femoris and 219 other cell types or tissues"/>
</dbReference>
<dbReference type="GO" id="GO:0005737">
    <property type="term" value="C:cytoplasm"/>
    <property type="evidence" value="ECO:0000314"/>
    <property type="project" value="UniProtKB"/>
</dbReference>
<dbReference type="GO" id="GO:0005634">
    <property type="term" value="C:nucleus"/>
    <property type="evidence" value="ECO:0000314"/>
    <property type="project" value="UniProtKB"/>
</dbReference>
<dbReference type="GO" id="GO:0005524">
    <property type="term" value="F:ATP binding"/>
    <property type="evidence" value="ECO:0007669"/>
    <property type="project" value="UniProtKB-KW"/>
</dbReference>
<dbReference type="GO" id="GO:0004829">
    <property type="term" value="F:threonine-tRNA ligase activity"/>
    <property type="evidence" value="ECO:0000314"/>
    <property type="project" value="UniProtKB"/>
</dbReference>
<dbReference type="GO" id="GO:0006435">
    <property type="term" value="P:threonyl-tRNA aminoacylation"/>
    <property type="evidence" value="ECO:0000314"/>
    <property type="project" value="UniProtKB"/>
</dbReference>
<dbReference type="CDD" id="cd01667">
    <property type="entry name" value="TGS_ThrRS"/>
    <property type="match status" value="1"/>
</dbReference>
<dbReference type="CDD" id="cd00860">
    <property type="entry name" value="ThrRS_anticodon"/>
    <property type="match status" value="1"/>
</dbReference>
<dbReference type="CDD" id="cd00771">
    <property type="entry name" value="ThrRS_core"/>
    <property type="match status" value="1"/>
</dbReference>
<dbReference type="FunFam" id="3.30.930.10:FF:000009">
    <property type="entry name" value="Threonine--tRNA ligase 2, cytoplasmic"/>
    <property type="match status" value="1"/>
</dbReference>
<dbReference type="FunFam" id="3.40.50.800:FF:000003">
    <property type="entry name" value="Threonine--tRNA ligase 2, cytoplasmic"/>
    <property type="match status" value="1"/>
</dbReference>
<dbReference type="FunFam" id="3.10.20.30:FF:000006">
    <property type="entry name" value="Threonine--tRNA ligase, cytoplasmic"/>
    <property type="match status" value="1"/>
</dbReference>
<dbReference type="FunFam" id="3.30.980.10:FF:000003">
    <property type="entry name" value="Threonine--tRNA ligase, cytoplasmic"/>
    <property type="match status" value="1"/>
</dbReference>
<dbReference type="Gene3D" id="3.10.20.30">
    <property type="match status" value="1"/>
</dbReference>
<dbReference type="Gene3D" id="3.40.50.800">
    <property type="entry name" value="Anticodon-binding domain"/>
    <property type="match status" value="1"/>
</dbReference>
<dbReference type="Gene3D" id="3.30.930.10">
    <property type="entry name" value="Bira Bifunctional Protein, Domain 2"/>
    <property type="match status" value="1"/>
</dbReference>
<dbReference type="Gene3D" id="3.30.980.10">
    <property type="entry name" value="Threonyl-trna Synthetase, Chain A, domain 2"/>
    <property type="match status" value="1"/>
</dbReference>
<dbReference type="HAMAP" id="MF_00184">
    <property type="entry name" value="Thr_tRNA_synth"/>
    <property type="match status" value="1"/>
</dbReference>
<dbReference type="InterPro" id="IPR002314">
    <property type="entry name" value="aa-tRNA-synt_IIb"/>
</dbReference>
<dbReference type="InterPro" id="IPR006195">
    <property type="entry name" value="aa-tRNA-synth_II"/>
</dbReference>
<dbReference type="InterPro" id="IPR045864">
    <property type="entry name" value="aa-tRNA-synth_II/BPL/LPL"/>
</dbReference>
<dbReference type="InterPro" id="IPR004154">
    <property type="entry name" value="Anticodon-bd"/>
</dbReference>
<dbReference type="InterPro" id="IPR036621">
    <property type="entry name" value="Anticodon-bd_dom_sf"/>
</dbReference>
<dbReference type="InterPro" id="IPR012675">
    <property type="entry name" value="Beta-grasp_dom_sf"/>
</dbReference>
<dbReference type="InterPro" id="IPR004095">
    <property type="entry name" value="TGS"/>
</dbReference>
<dbReference type="InterPro" id="IPR012676">
    <property type="entry name" value="TGS-like"/>
</dbReference>
<dbReference type="InterPro" id="IPR002320">
    <property type="entry name" value="Thr-tRNA-ligase_IIa"/>
</dbReference>
<dbReference type="InterPro" id="IPR018163">
    <property type="entry name" value="Thr/Ala-tRNA-synth_IIc_edit"/>
</dbReference>
<dbReference type="InterPro" id="IPR047246">
    <property type="entry name" value="ThrRS_anticodon"/>
</dbReference>
<dbReference type="InterPro" id="IPR033728">
    <property type="entry name" value="ThrRS_core"/>
</dbReference>
<dbReference type="InterPro" id="IPR012947">
    <property type="entry name" value="tRNA_SAD"/>
</dbReference>
<dbReference type="NCBIfam" id="TIGR00418">
    <property type="entry name" value="thrS"/>
    <property type="match status" value="1"/>
</dbReference>
<dbReference type="PANTHER" id="PTHR11451:SF38">
    <property type="entry name" value="THREONINE--TRNA LIGASE 2, CYTOPLASMIC"/>
    <property type="match status" value="1"/>
</dbReference>
<dbReference type="PANTHER" id="PTHR11451">
    <property type="entry name" value="THREONINE-TRNA LIGASE"/>
    <property type="match status" value="1"/>
</dbReference>
<dbReference type="Pfam" id="PF03129">
    <property type="entry name" value="HGTP_anticodon"/>
    <property type="match status" value="1"/>
</dbReference>
<dbReference type="Pfam" id="PF02824">
    <property type="entry name" value="TGS"/>
    <property type="match status" value="1"/>
</dbReference>
<dbReference type="Pfam" id="PF00587">
    <property type="entry name" value="tRNA-synt_2b"/>
    <property type="match status" value="1"/>
</dbReference>
<dbReference type="Pfam" id="PF07973">
    <property type="entry name" value="tRNA_SAD"/>
    <property type="match status" value="1"/>
</dbReference>
<dbReference type="PRINTS" id="PR01047">
    <property type="entry name" value="TRNASYNTHTHR"/>
</dbReference>
<dbReference type="SMART" id="SM00863">
    <property type="entry name" value="tRNA_SAD"/>
    <property type="match status" value="1"/>
</dbReference>
<dbReference type="SUPFAM" id="SSF52954">
    <property type="entry name" value="Class II aaRS ABD-related"/>
    <property type="match status" value="1"/>
</dbReference>
<dbReference type="SUPFAM" id="SSF55681">
    <property type="entry name" value="Class II aaRS and biotin synthetases"/>
    <property type="match status" value="1"/>
</dbReference>
<dbReference type="SUPFAM" id="SSF81271">
    <property type="entry name" value="TGS-like"/>
    <property type="match status" value="1"/>
</dbReference>
<dbReference type="SUPFAM" id="SSF55186">
    <property type="entry name" value="ThrRS/AlaRS common domain"/>
    <property type="match status" value="1"/>
</dbReference>
<dbReference type="PROSITE" id="PS50862">
    <property type="entry name" value="AA_TRNA_LIGASE_II"/>
    <property type="match status" value="1"/>
</dbReference>
<dbReference type="PROSITE" id="PS51880">
    <property type="entry name" value="TGS"/>
    <property type="match status" value="1"/>
</dbReference>
<feature type="initiator methionine" description="Removed" evidence="1">
    <location>
        <position position="1"/>
    </location>
</feature>
<feature type="chain" id="PRO_0000333829" description="Threonine--tRNA ligase 2, cytoplasmic">
    <location>
        <begin position="2"/>
        <end position="790"/>
    </location>
</feature>
<feature type="domain" description="TGS" evidence="3">
    <location>
        <begin position="148"/>
        <end position="210"/>
    </location>
</feature>
<feature type="region of interest" description="Disordered" evidence="4">
    <location>
        <begin position="80"/>
        <end position="117"/>
    </location>
</feature>
<feature type="coiled-coil region" evidence="2">
    <location>
        <begin position="13"/>
        <end position="68"/>
    </location>
</feature>
<feature type="short sequence motif" description="Nuclear localization signal" evidence="5">
    <location>
        <begin position="774"/>
        <end position="780"/>
    </location>
</feature>
<feature type="compositionally biased region" description="Basic and acidic residues" evidence="4">
    <location>
        <begin position="96"/>
        <end position="117"/>
    </location>
</feature>
<feature type="modified residue" description="N-acetylalanine" evidence="1">
    <location>
        <position position="2"/>
    </location>
</feature>
<feature type="modified residue" description="Phosphoserine" evidence="1">
    <location>
        <position position="441"/>
    </location>
</feature>
<feature type="mutagenesis site" description="Impairs post-transfer editing activity but no effect on aminoacylation activity; when associated with A-226." evidence="5">
    <original>H</original>
    <variation>A</variation>
    <location>
        <position position="222"/>
    </location>
</feature>
<feature type="mutagenesis site" description="Impairs post-transfer editing activity but no effect on aminoacylation activity; when associated with A-222." evidence="5">
    <original>H</original>
    <variation>A</variation>
    <location>
        <position position="226"/>
    </location>
</feature>
<feature type="mutagenesis site" description="Impairs aminoacylation activity." evidence="5">
    <original>C</original>
    <variation>A</variation>
    <location>
        <position position="480"/>
    </location>
</feature>
<feature type="mutagenesis site" description="Impairs aminoacylation activity." evidence="5">
    <original>R</original>
    <variation>A</variation>
    <location>
        <position position="509"/>
    </location>
</feature>
<feature type="mutagenesis site" description="Abolishes nuclear localization." evidence="5">
    <original>KLKNLKK</original>
    <variation>ALANLAA</variation>
    <location>
        <begin position="774"/>
        <end position="780"/>
    </location>
</feature>
<feature type="sequence conflict" description="In Ref. 2; AAH39225." evidence="6" ref="2">
    <original>F</original>
    <variation>I</variation>
    <location>
        <position position="381"/>
    </location>
</feature>
<name>SYTC2_MOUSE</name>
<organism>
    <name type="scientific">Mus musculus</name>
    <name type="common">Mouse</name>
    <dbReference type="NCBI Taxonomy" id="10090"/>
    <lineage>
        <taxon>Eukaryota</taxon>
        <taxon>Metazoa</taxon>
        <taxon>Chordata</taxon>
        <taxon>Craniata</taxon>
        <taxon>Vertebrata</taxon>
        <taxon>Euteleostomi</taxon>
        <taxon>Mammalia</taxon>
        <taxon>Eutheria</taxon>
        <taxon>Euarchontoglires</taxon>
        <taxon>Glires</taxon>
        <taxon>Rodentia</taxon>
        <taxon>Myomorpha</taxon>
        <taxon>Muroidea</taxon>
        <taxon>Muridae</taxon>
        <taxon>Murinae</taxon>
        <taxon>Mus</taxon>
        <taxon>Mus</taxon>
    </lineage>
</organism>
<sequence length="790" mass="91318">MAAQALAAQAVASRLQRQEEDIRWLCAEVQRLRDEQLRGPERGQAEGPRLTREVAQLQAENRDLHQRLCGLRLRLAEQRRTEAGRAAAHEPPTQNQEKDTKKKRLKQSEPGREVKQPNFIKERLQLFETLKTDHQLLPATQEKKNTNNVISVRVAGGKTVQGERWKTTPYQVAAGISKELAEHTVIAKVNGVLWDLDRPLEGDSTVELLMFDNEEAQAVYWHSSAHILGEAMELYYGGHLCYGPPIENGFYYDMFIEDRVVSSTELSALENICKTIIKEKQPFERLEVSKDTLLEMFKYNKFKCRILKEKVDTPTTTVYRCGPLIDLCKGPHVRHTGKIKAIKIFKNSSTYWEGNPEMETLQRIYGISFPDSKMMKDWEKFQEEAKSRDHRKIGKEQELFFFHDLSPGSCFFLPRGAFIYNALMDFIREEYHKRNFTEVLSPNMYNSKLWETSGHWQHYSNNMFTFDVEKDTFALKPMNCPGHCLMFAHRPRSWREMPVRFADFGVLHRNELSGTLSGLTRVRRFQQDDAHIFCMVEQIEEEIKGCLHFLQSVYSTFGFSFQLNLSTRPEHFLGEIEIWDEAERQLQNSLVEFGKPWKINPGDGAFYGPKIDIKIKDAIGRYHQCATIQLDFQLPIRFNLTYVSKDGDDKNRPVIIHRAILGSVERMIAILSENYGGKWPLWLSPRQVMVIPVGPACENYALQVSKECFEEGFMADVDLDDSCTLNKKIRNAQLAQYNFILVVGEKEKINNAVNVRTRDNKIHGEISIASVIEKLKNLKKSRTLNAEEDF</sequence>
<proteinExistence type="evidence at protein level"/>
<comment type="function">
    <text evidence="5">Catalyzes the attachment of threonine to tRNA(Thr) in a two-step reaction: threonine is first activated by ATP to form Thr-AMP and then transferred to the acceptor end of tRNA(Thr). Also edits incorrectly charged tRNA(Thr) via its editing domain, at the post-transfer stage.</text>
</comment>
<comment type="catalytic activity">
    <reaction evidence="5">
        <text>tRNA(Thr) + L-threonine + ATP = L-threonyl-tRNA(Thr) + AMP + diphosphate + H(+)</text>
        <dbReference type="Rhea" id="RHEA:24624"/>
        <dbReference type="Rhea" id="RHEA-COMP:9670"/>
        <dbReference type="Rhea" id="RHEA-COMP:9704"/>
        <dbReference type="ChEBI" id="CHEBI:15378"/>
        <dbReference type="ChEBI" id="CHEBI:30616"/>
        <dbReference type="ChEBI" id="CHEBI:33019"/>
        <dbReference type="ChEBI" id="CHEBI:57926"/>
        <dbReference type="ChEBI" id="CHEBI:78442"/>
        <dbReference type="ChEBI" id="CHEBI:78534"/>
        <dbReference type="ChEBI" id="CHEBI:456215"/>
        <dbReference type="EC" id="6.1.1.3"/>
    </reaction>
</comment>
<comment type="subunit">
    <text evidence="1">May be a component of the multisynthetase complex (MSC), a large multi-subunit complex which contains at least eight different aminoacyl-tRNA synthetases plus three auxillary subunits AIMP1, AIMP2 and EEF1E1. Interacts with the MSC components EPRS1, AIMP1, AIMP2 and KARS1.</text>
</comment>
<comment type="subcellular location">
    <subcellularLocation>
        <location evidence="5">Cytoplasm</location>
    </subcellularLocation>
    <subcellularLocation>
        <location evidence="5">Nucleus</location>
    </subcellularLocation>
    <text evidence="5">Primarily cytoplasmic. Also detected at lower levels in the nucleus.</text>
</comment>
<comment type="tissue specificity">
    <text evidence="5">Ubiquitous (at protein level). Strongly expressed in muscle (at protein level). Moderately expressed in heart and liver (at protein level). Weakly expressed in stomach, kidney, testis, spleen, brain, fat and lung (at protein level).</text>
</comment>
<comment type="similarity">
    <text evidence="6">Belongs to the class-II aminoacyl-tRNA synthetase family.</text>
</comment>